<organism>
    <name type="scientific">Streptococcus gordonii (strain Challis / ATCC 35105 / BCRC 15272 / CH1 / DL1 / V288)</name>
    <dbReference type="NCBI Taxonomy" id="467705"/>
    <lineage>
        <taxon>Bacteria</taxon>
        <taxon>Bacillati</taxon>
        <taxon>Bacillota</taxon>
        <taxon>Bacilli</taxon>
        <taxon>Lactobacillales</taxon>
        <taxon>Streptococcaceae</taxon>
        <taxon>Streptococcus</taxon>
    </lineage>
</organism>
<reference key="1">
    <citation type="journal article" date="2007" name="J. Bacteriol.">
        <title>Genome-wide transcriptional changes in Streptococcus gordonii in response to competence signaling peptide.</title>
        <authorList>
            <person name="Vickerman M.M."/>
            <person name="Iobst S."/>
            <person name="Jesionowski A.M."/>
            <person name="Gill S.R."/>
        </authorList>
    </citation>
    <scope>NUCLEOTIDE SEQUENCE [LARGE SCALE GENOMIC DNA]</scope>
    <source>
        <strain>Challis / ATCC 35105 / BCRC 15272 / CH1 / DL1 / V288</strain>
    </source>
</reference>
<comment type="function">
    <text evidence="1">Catalyzes the dephosphorylation of undecaprenyl diphosphate (UPP). Confers resistance to bacitracin.</text>
</comment>
<comment type="catalytic activity">
    <reaction evidence="1">
        <text>di-trans,octa-cis-undecaprenyl diphosphate + H2O = di-trans,octa-cis-undecaprenyl phosphate + phosphate + H(+)</text>
        <dbReference type="Rhea" id="RHEA:28094"/>
        <dbReference type="ChEBI" id="CHEBI:15377"/>
        <dbReference type="ChEBI" id="CHEBI:15378"/>
        <dbReference type="ChEBI" id="CHEBI:43474"/>
        <dbReference type="ChEBI" id="CHEBI:58405"/>
        <dbReference type="ChEBI" id="CHEBI:60392"/>
        <dbReference type="EC" id="3.6.1.27"/>
    </reaction>
</comment>
<comment type="subcellular location">
    <subcellularLocation>
        <location evidence="1">Cell membrane</location>
        <topology evidence="1">Multi-pass membrane protein</topology>
    </subcellularLocation>
</comment>
<comment type="miscellaneous">
    <text>Bacitracin is thought to be involved in the inhibition of peptidoglycan synthesis by sequestering undecaprenyl diphosphate, thereby reducing the pool of lipid carrier available.</text>
</comment>
<comment type="similarity">
    <text evidence="1">Belongs to the UppP family.</text>
</comment>
<evidence type="ECO:0000255" key="1">
    <source>
        <dbReference type="HAMAP-Rule" id="MF_01006"/>
    </source>
</evidence>
<sequence>MFFIEIIKSVIFGIIEGITEWLPISSTGHLILVQEFIHYQKQNAAFMEMFNVVIQLGAILAVVFIYFDKLNPFKPDKTPRQVQKTWQLWAKVVVASLPAVIIGIPLDNWFEKNFHNFVSVAIMLIIYGIAFILIERRNQEVEPTVTNLEKLPYKTALYIGFFQVLSLFPGTSRSGATIVGGLLNGTSRSVVTEFTFFLGIPVMFGASGIKVLKFILKGNSLDLGQLTLLLVAMIVAFGVSMYVIRFLTDYVKKHDFTVFGKYRIGLGALLLIYWVFKALFAK</sequence>
<feature type="chain" id="PRO_1000083995" description="Undecaprenyl-diphosphatase">
    <location>
        <begin position="1"/>
        <end position="282"/>
    </location>
</feature>
<feature type="transmembrane region" description="Helical" evidence="1">
    <location>
        <begin position="45"/>
        <end position="65"/>
    </location>
</feature>
<feature type="transmembrane region" description="Helical" evidence="1">
    <location>
        <begin position="86"/>
        <end position="106"/>
    </location>
</feature>
<feature type="transmembrane region" description="Helical" evidence="1">
    <location>
        <begin position="114"/>
        <end position="134"/>
    </location>
</feature>
<feature type="transmembrane region" description="Helical" evidence="1">
    <location>
        <begin position="151"/>
        <end position="171"/>
    </location>
</feature>
<feature type="transmembrane region" description="Helical" evidence="1">
    <location>
        <begin position="196"/>
        <end position="216"/>
    </location>
</feature>
<feature type="transmembrane region" description="Helical" evidence="1">
    <location>
        <begin position="224"/>
        <end position="244"/>
    </location>
</feature>
<feature type="transmembrane region" description="Helical" evidence="1">
    <location>
        <begin position="256"/>
        <end position="276"/>
    </location>
</feature>
<proteinExistence type="inferred from homology"/>
<keyword id="KW-0046">Antibiotic resistance</keyword>
<keyword id="KW-1003">Cell membrane</keyword>
<keyword id="KW-0133">Cell shape</keyword>
<keyword id="KW-0961">Cell wall biogenesis/degradation</keyword>
<keyword id="KW-0378">Hydrolase</keyword>
<keyword id="KW-0472">Membrane</keyword>
<keyword id="KW-0573">Peptidoglycan synthesis</keyword>
<keyword id="KW-1185">Reference proteome</keyword>
<keyword id="KW-0812">Transmembrane</keyword>
<keyword id="KW-1133">Transmembrane helix</keyword>
<name>UPPP_STRGC</name>
<protein>
    <recommendedName>
        <fullName evidence="1">Undecaprenyl-diphosphatase</fullName>
        <ecNumber evidence="1">3.6.1.27</ecNumber>
    </recommendedName>
    <alternativeName>
        <fullName evidence="1">Bacitracin resistance protein</fullName>
    </alternativeName>
    <alternativeName>
        <fullName evidence="1">Undecaprenyl pyrophosphate phosphatase</fullName>
    </alternativeName>
</protein>
<dbReference type="EC" id="3.6.1.27" evidence="1"/>
<dbReference type="EMBL" id="CP000725">
    <property type="protein sequence ID" value="ABV10913.1"/>
    <property type="molecule type" value="Genomic_DNA"/>
</dbReference>
<dbReference type="RefSeq" id="WP_012130769.1">
    <property type="nucleotide sequence ID" value="NC_009785.1"/>
</dbReference>
<dbReference type="SMR" id="A8AYY7"/>
<dbReference type="STRING" id="467705.SGO_1725"/>
<dbReference type="KEGG" id="sgo:SGO_1725"/>
<dbReference type="eggNOG" id="COG1968">
    <property type="taxonomic scope" value="Bacteria"/>
</dbReference>
<dbReference type="HOGENOM" id="CLU_060296_2_0_9"/>
<dbReference type="Proteomes" id="UP000001131">
    <property type="component" value="Chromosome"/>
</dbReference>
<dbReference type="GO" id="GO:0005886">
    <property type="term" value="C:plasma membrane"/>
    <property type="evidence" value="ECO:0007669"/>
    <property type="project" value="UniProtKB-SubCell"/>
</dbReference>
<dbReference type="GO" id="GO:0050380">
    <property type="term" value="F:undecaprenyl-diphosphatase activity"/>
    <property type="evidence" value="ECO:0007669"/>
    <property type="project" value="UniProtKB-UniRule"/>
</dbReference>
<dbReference type="GO" id="GO:0071555">
    <property type="term" value="P:cell wall organization"/>
    <property type="evidence" value="ECO:0007669"/>
    <property type="project" value="UniProtKB-KW"/>
</dbReference>
<dbReference type="GO" id="GO:0009252">
    <property type="term" value="P:peptidoglycan biosynthetic process"/>
    <property type="evidence" value="ECO:0007669"/>
    <property type="project" value="UniProtKB-KW"/>
</dbReference>
<dbReference type="GO" id="GO:0008360">
    <property type="term" value="P:regulation of cell shape"/>
    <property type="evidence" value="ECO:0007669"/>
    <property type="project" value="UniProtKB-KW"/>
</dbReference>
<dbReference type="GO" id="GO:0046677">
    <property type="term" value="P:response to antibiotic"/>
    <property type="evidence" value="ECO:0007669"/>
    <property type="project" value="UniProtKB-UniRule"/>
</dbReference>
<dbReference type="HAMAP" id="MF_01006">
    <property type="entry name" value="Undec_diphosphatase"/>
    <property type="match status" value="1"/>
</dbReference>
<dbReference type="InterPro" id="IPR003824">
    <property type="entry name" value="UppP"/>
</dbReference>
<dbReference type="NCBIfam" id="NF001390">
    <property type="entry name" value="PRK00281.1-4"/>
    <property type="match status" value="1"/>
</dbReference>
<dbReference type="NCBIfam" id="NF001391">
    <property type="entry name" value="PRK00281.1-5"/>
    <property type="match status" value="1"/>
</dbReference>
<dbReference type="PANTHER" id="PTHR30622">
    <property type="entry name" value="UNDECAPRENYL-DIPHOSPHATASE"/>
    <property type="match status" value="1"/>
</dbReference>
<dbReference type="PANTHER" id="PTHR30622:SF3">
    <property type="entry name" value="UNDECAPRENYL-DIPHOSPHATASE"/>
    <property type="match status" value="1"/>
</dbReference>
<dbReference type="Pfam" id="PF02673">
    <property type="entry name" value="BacA"/>
    <property type="match status" value="1"/>
</dbReference>
<accession>A8AYY7</accession>
<gene>
    <name evidence="1" type="primary">uppP</name>
    <name type="ordered locus">SGO_1725</name>
</gene>